<organism>
    <name type="scientific">Haemophilus influenzae (strain 86-028NP)</name>
    <dbReference type="NCBI Taxonomy" id="281310"/>
    <lineage>
        <taxon>Bacteria</taxon>
        <taxon>Pseudomonadati</taxon>
        <taxon>Pseudomonadota</taxon>
        <taxon>Gammaproteobacteria</taxon>
        <taxon>Pasteurellales</taxon>
        <taxon>Pasteurellaceae</taxon>
        <taxon>Haemophilus</taxon>
    </lineage>
</organism>
<feature type="chain" id="PRO_0000261874" description="Glucose-1-phosphate adenylyltransferase">
    <location>
        <begin position="1"/>
        <end position="437"/>
    </location>
</feature>
<feature type="binding site" evidence="1">
    <location>
        <position position="113"/>
    </location>
    <ligand>
        <name>alpha-D-glucose 1-phosphate</name>
        <dbReference type="ChEBI" id="CHEBI:58601"/>
    </ligand>
</feature>
<feature type="binding site" evidence="1">
    <location>
        <position position="179"/>
    </location>
    <ligand>
        <name>alpha-D-glucose 1-phosphate</name>
        <dbReference type="ChEBI" id="CHEBI:58601"/>
    </ligand>
</feature>
<feature type="binding site" evidence="1">
    <location>
        <begin position="194"/>
        <end position="195"/>
    </location>
    <ligand>
        <name>alpha-D-glucose 1-phosphate</name>
        <dbReference type="ChEBI" id="CHEBI:58601"/>
    </ligand>
</feature>
<feature type="binding site" evidence="1">
    <location>
        <position position="212"/>
    </location>
    <ligand>
        <name>alpha-D-glucose 1-phosphate</name>
        <dbReference type="ChEBI" id="CHEBI:58601"/>
    </ligand>
</feature>
<evidence type="ECO:0000255" key="1">
    <source>
        <dbReference type="HAMAP-Rule" id="MF_00624"/>
    </source>
</evidence>
<evidence type="ECO:0000305" key="2"/>
<keyword id="KW-0067">ATP-binding</keyword>
<keyword id="KW-0119">Carbohydrate metabolism</keyword>
<keyword id="KW-0320">Glycogen biosynthesis</keyword>
<keyword id="KW-0321">Glycogen metabolism</keyword>
<keyword id="KW-0547">Nucleotide-binding</keyword>
<keyword id="KW-0548">Nucleotidyltransferase</keyword>
<keyword id="KW-0808">Transferase</keyword>
<comment type="function">
    <text evidence="1">Involved in the biosynthesis of ADP-glucose, a building block required for the elongation reactions to produce glycogen. Catalyzes the reaction between ATP and alpha-D-glucose 1-phosphate (G1P) to produce pyrophosphate and ADP-Glc.</text>
</comment>
<comment type="catalytic activity">
    <reaction evidence="1">
        <text>alpha-D-glucose 1-phosphate + ATP + H(+) = ADP-alpha-D-glucose + diphosphate</text>
        <dbReference type="Rhea" id="RHEA:12120"/>
        <dbReference type="ChEBI" id="CHEBI:15378"/>
        <dbReference type="ChEBI" id="CHEBI:30616"/>
        <dbReference type="ChEBI" id="CHEBI:33019"/>
        <dbReference type="ChEBI" id="CHEBI:57498"/>
        <dbReference type="ChEBI" id="CHEBI:58601"/>
        <dbReference type="EC" id="2.7.7.27"/>
    </reaction>
</comment>
<comment type="pathway">
    <text evidence="1">Glycan biosynthesis; glycogen biosynthesis.</text>
</comment>
<comment type="subunit">
    <text evidence="1">Homotetramer.</text>
</comment>
<comment type="similarity">
    <text evidence="1">Belongs to the bacterial/plant glucose-1-phosphate adenylyltransferase family.</text>
</comment>
<comment type="sequence caution" evidence="2">
    <conflict type="erroneous initiation">
        <sequence resource="EMBL-CDS" id="AAX88578"/>
    </conflict>
</comment>
<gene>
    <name evidence="1" type="primary">glgC</name>
    <name type="ordered locus">NTHI1807</name>
</gene>
<dbReference type="EC" id="2.7.7.27" evidence="1"/>
<dbReference type="EMBL" id="CP000057">
    <property type="protein sequence ID" value="AAX88578.1"/>
    <property type="status" value="ALT_INIT"/>
    <property type="molecule type" value="Genomic_DNA"/>
</dbReference>
<dbReference type="SMR" id="Q4QK69"/>
<dbReference type="KEGG" id="hit:NTHI1807"/>
<dbReference type="HOGENOM" id="CLU_029499_14_1_6"/>
<dbReference type="UniPathway" id="UPA00164"/>
<dbReference type="Proteomes" id="UP000002525">
    <property type="component" value="Chromosome"/>
</dbReference>
<dbReference type="GO" id="GO:0005524">
    <property type="term" value="F:ATP binding"/>
    <property type="evidence" value="ECO:0007669"/>
    <property type="project" value="UniProtKB-KW"/>
</dbReference>
<dbReference type="GO" id="GO:0008878">
    <property type="term" value="F:glucose-1-phosphate adenylyltransferase activity"/>
    <property type="evidence" value="ECO:0007669"/>
    <property type="project" value="UniProtKB-UniRule"/>
</dbReference>
<dbReference type="GO" id="GO:0005978">
    <property type="term" value="P:glycogen biosynthetic process"/>
    <property type="evidence" value="ECO:0007669"/>
    <property type="project" value="UniProtKB-UniRule"/>
</dbReference>
<dbReference type="CDD" id="cd02508">
    <property type="entry name" value="ADP_Glucose_PP"/>
    <property type="match status" value="1"/>
</dbReference>
<dbReference type="CDD" id="cd04651">
    <property type="entry name" value="LbH_G1P_AT_C"/>
    <property type="match status" value="1"/>
</dbReference>
<dbReference type="Gene3D" id="2.160.10.10">
    <property type="entry name" value="Hexapeptide repeat proteins"/>
    <property type="match status" value="1"/>
</dbReference>
<dbReference type="Gene3D" id="3.90.550.10">
    <property type="entry name" value="Spore Coat Polysaccharide Biosynthesis Protein SpsA, Chain A"/>
    <property type="match status" value="1"/>
</dbReference>
<dbReference type="HAMAP" id="MF_00624">
    <property type="entry name" value="GlgC"/>
    <property type="match status" value="1"/>
</dbReference>
<dbReference type="InterPro" id="IPR011831">
    <property type="entry name" value="ADP-Glc_PPase"/>
</dbReference>
<dbReference type="InterPro" id="IPR005836">
    <property type="entry name" value="ADP_Glu_pyroP_CS"/>
</dbReference>
<dbReference type="InterPro" id="IPR023049">
    <property type="entry name" value="GlgC_bac"/>
</dbReference>
<dbReference type="InterPro" id="IPR056818">
    <property type="entry name" value="GlmU/GlgC-like_hexapep"/>
</dbReference>
<dbReference type="InterPro" id="IPR005835">
    <property type="entry name" value="NTP_transferase_dom"/>
</dbReference>
<dbReference type="InterPro" id="IPR029044">
    <property type="entry name" value="Nucleotide-diphossugar_trans"/>
</dbReference>
<dbReference type="InterPro" id="IPR011004">
    <property type="entry name" value="Trimer_LpxA-like_sf"/>
</dbReference>
<dbReference type="NCBIfam" id="TIGR02091">
    <property type="entry name" value="glgC"/>
    <property type="match status" value="1"/>
</dbReference>
<dbReference type="NCBIfam" id="NF001947">
    <property type="entry name" value="PRK00725.1"/>
    <property type="match status" value="1"/>
</dbReference>
<dbReference type="NCBIfam" id="NF002023">
    <property type="entry name" value="PRK00844.1"/>
    <property type="match status" value="1"/>
</dbReference>
<dbReference type="PANTHER" id="PTHR43523:SF2">
    <property type="entry name" value="GLUCOSE-1-PHOSPHATE ADENYLYLTRANSFERASE"/>
    <property type="match status" value="1"/>
</dbReference>
<dbReference type="PANTHER" id="PTHR43523">
    <property type="entry name" value="GLUCOSE-1-PHOSPHATE ADENYLYLTRANSFERASE-RELATED"/>
    <property type="match status" value="1"/>
</dbReference>
<dbReference type="Pfam" id="PF24894">
    <property type="entry name" value="Hexapep_GlmU"/>
    <property type="match status" value="1"/>
</dbReference>
<dbReference type="Pfam" id="PF00483">
    <property type="entry name" value="NTP_transferase"/>
    <property type="match status" value="1"/>
</dbReference>
<dbReference type="SUPFAM" id="SSF53448">
    <property type="entry name" value="Nucleotide-diphospho-sugar transferases"/>
    <property type="match status" value="1"/>
</dbReference>
<dbReference type="SUPFAM" id="SSF51161">
    <property type="entry name" value="Trimeric LpxA-like enzymes"/>
    <property type="match status" value="1"/>
</dbReference>
<dbReference type="PROSITE" id="PS00808">
    <property type="entry name" value="ADP_GLC_PYROPHOSPH_1"/>
    <property type="match status" value="1"/>
</dbReference>
<dbReference type="PROSITE" id="PS00809">
    <property type="entry name" value="ADP_GLC_PYROPHOSPH_2"/>
    <property type="match status" value="1"/>
</dbReference>
<accession>Q4QK69</accession>
<name>GLGC_HAEI8</name>
<protein>
    <recommendedName>
        <fullName evidence="1">Glucose-1-phosphate adenylyltransferase</fullName>
        <ecNumber evidence="1">2.7.7.27</ecNumber>
    </recommendedName>
    <alternativeName>
        <fullName evidence="1">ADP-glucose pyrophosphorylase</fullName>
        <shortName evidence="1">ADPGlc PPase</shortName>
    </alternativeName>
    <alternativeName>
        <fullName evidence="1">ADP-glucose synthase</fullName>
    </alternativeName>
</protein>
<reference key="1">
    <citation type="journal article" date="2005" name="J. Bacteriol.">
        <title>Genomic sequence of an otitis media isolate of nontypeable Haemophilus influenzae: comparative study with H. influenzae serotype d, strain KW20.</title>
        <authorList>
            <person name="Harrison A."/>
            <person name="Dyer D.W."/>
            <person name="Gillaspy A."/>
            <person name="Ray W.C."/>
            <person name="Mungur R."/>
            <person name="Carson M.B."/>
            <person name="Zhong H."/>
            <person name="Gipson J."/>
            <person name="Gipson M."/>
            <person name="Johnson L.S."/>
            <person name="Lewis L."/>
            <person name="Bakaletz L.O."/>
            <person name="Munson R.S. Jr."/>
        </authorList>
    </citation>
    <scope>NUCLEOTIDE SEQUENCE [LARGE SCALE GENOMIC DNA]</scope>
    <source>
        <strain>86-028NP</strain>
    </source>
</reference>
<proteinExistence type="inferred from homology"/>
<sequence>MEILMKSGDLNKYDLVKNTLVLVLAGGRGSRLHELTDKRAKPALYFGGNRRIIDFALSNCINSGLNRIGVVTQYAAHSLLRHLQTGWSFLPQERGEFVDMLPARQQIDDSTWYRGTADAVYQNMAIIKNHYRPKYILILAGDHIYKQDYSVMLMDHVNSGAKCTIGCIEVPRSEAHEFGVMAVNENLKVKAFVEKPKDPPAMVGKPDVSLTSMGIYVFDADYLYKMLDREVGTPNTSHDFGKDVLPKCLEEGALYAHPFSRSCMGRNTEGEIYWRDVGTLDSFWQSNIDLVSENPQLDIYDQSWPIRGNPVQAYPSKFFYKHSNVHPVDNSLIGGGCVITDASISNSVLFDRIKIDSFSKVDHCVVLPQVKIGKNCVLKNCIIDRECEIPDGMQIGVDMEEDKNRFRISSTGKVILVTPKMLKILEGHEIGEEGHLD</sequence>